<keyword id="KW-0378">Hydrolase</keyword>
<keyword id="KW-1185">Reference proteome</keyword>
<evidence type="ECO:0000250" key="1"/>
<evidence type="ECO:0000255" key="2">
    <source>
        <dbReference type="PROSITE-ProRule" id="PRU01106"/>
    </source>
</evidence>
<evidence type="ECO:0000305" key="3"/>
<reference key="1">
    <citation type="journal article" date="2002" name="Nucleic Acids Res.">
        <title>Genome sequence of Shigella flexneri 2a: insights into pathogenicity through comparison with genomes of Escherichia coli K12 and O157.</title>
        <authorList>
            <person name="Jin Q."/>
            <person name="Yuan Z."/>
            <person name="Xu J."/>
            <person name="Wang Y."/>
            <person name="Shen Y."/>
            <person name="Lu W."/>
            <person name="Wang J."/>
            <person name="Liu H."/>
            <person name="Yang J."/>
            <person name="Yang F."/>
            <person name="Zhang X."/>
            <person name="Zhang J."/>
            <person name="Yang G."/>
            <person name="Wu H."/>
            <person name="Qu D."/>
            <person name="Dong J."/>
            <person name="Sun L."/>
            <person name="Xue Y."/>
            <person name="Zhao A."/>
            <person name="Gao Y."/>
            <person name="Zhu J."/>
            <person name="Kan B."/>
            <person name="Ding K."/>
            <person name="Chen S."/>
            <person name="Cheng H."/>
            <person name="Yao Z."/>
            <person name="He B."/>
            <person name="Chen R."/>
            <person name="Ma D."/>
            <person name="Qiang B."/>
            <person name="Wen Y."/>
            <person name="Hou Y."/>
            <person name="Yu J."/>
        </authorList>
    </citation>
    <scope>NUCLEOTIDE SEQUENCE [LARGE SCALE GENOMIC DNA]</scope>
    <source>
        <strain>301 / Serotype 2a</strain>
    </source>
</reference>
<reference key="2">
    <citation type="journal article" date="2003" name="Infect. Immun.">
        <title>Complete genome sequence and comparative genomics of Shigella flexneri serotype 2a strain 2457T.</title>
        <authorList>
            <person name="Wei J."/>
            <person name="Goldberg M.B."/>
            <person name="Burland V."/>
            <person name="Venkatesan M.M."/>
            <person name="Deng W."/>
            <person name="Fournier G."/>
            <person name="Mayhew G.F."/>
            <person name="Plunkett G. III"/>
            <person name="Rose D.J."/>
            <person name="Darling A."/>
            <person name="Mau B."/>
            <person name="Perna N.T."/>
            <person name="Payne S.M."/>
            <person name="Runyen-Janecky L.J."/>
            <person name="Zhou S."/>
            <person name="Schwartz D.C."/>
            <person name="Blattner F.R."/>
        </authorList>
    </citation>
    <scope>NUCLEOTIDE SEQUENCE [LARGE SCALE GENOMIC DNA]</scope>
    <source>
        <strain>ATCC 700930 / 2457T / Serotype 2a</strain>
    </source>
</reference>
<sequence>MSTTHNVPQGDLVLRTLAMPADTNANGDIFGGWLMSQMDIGGAILAKEIAHGRVVTVRVEGMTFLRPVAVGDVVCCYARCVQKGTTSVSINIEVWVKKVASEPIGQRYKATEALFKYVAVDPEGKPRALPVE</sequence>
<protein>
    <recommendedName>
        <fullName>Acyl-CoA thioester hydrolase YciA</fullName>
        <ecNumber>3.1.2.-</ecNumber>
    </recommendedName>
</protein>
<gene>
    <name type="primary">yciA</name>
    <name type="ordered locus">SF1256</name>
    <name type="ordered locus">S1342</name>
</gene>
<accession>P0A8Z2</accession>
<accession>P04379</accession>
<feature type="chain" id="PRO_0000053821" description="Acyl-CoA thioester hydrolase YciA">
    <location>
        <begin position="1"/>
        <end position="132"/>
    </location>
</feature>
<feature type="domain" description="HotDog ACOT-type" evidence="2">
    <location>
        <begin position="8"/>
        <end position="123"/>
    </location>
</feature>
<comment type="function">
    <text evidence="1">Catalyzes the hydrolysis of the thioester bond in palmitoyl-CoA and malonyl-CoA.</text>
</comment>
<comment type="similarity">
    <text evidence="3">Belongs to the acyl coenzyme A hydrolase family.</text>
</comment>
<proteinExistence type="inferred from homology"/>
<organism>
    <name type="scientific">Shigella flexneri</name>
    <dbReference type="NCBI Taxonomy" id="623"/>
    <lineage>
        <taxon>Bacteria</taxon>
        <taxon>Pseudomonadati</taxon>
        <taxon>Pseudomonadota</taxon>
        <taxon>Gammaproteobacteria</taxon>
        <taxon>Enterobacterales</taxon>
        <taxon>Enterobacteriaceae</taxon>
        <taxon>Shigella</taxon>
    </lineage>
</organism>
<dbReference type="EC" id="3.1.2.-"/>
<dbReference type="EMBL" id="AE005674">
    <property type="protein sequence ID" value="AAN42869.1"/>
    <property type="molecule type" value="Genomic_DNA"/>
</dbReference>
<dbReference type="EMBL" id="AE014073">
    <property type="protein sequence ID" value="AAP16754.1"/>
    <property type="molecule type" value="Genomic_DNA"/>
</dbReference>
<dbReference type="RefSeq" id="NP_707162.1">
    <property type="nucleotide sequence ID" value="NC_004337.2"/>
</dbReference>
<dbReference type="RefSeq" id="WP_000108160.1">
    <property type="nucleotide sequence ID" value="NZ_WPGW01000009.1"/>
</dbReference>
<dbReference type="SMR" id="P0A8Z2"/>
<dbReference type="STRING" id="198214.SF1256"/>
<dbReference type="PaxDb" id="198214-SF1256"/>
<dbReference type="GeneID" id="1024202"/>
<dbReference type="GeneID" id="93775322"/>
<dbReference type="KEGG" id="sfl:SF1256"/>
<dbReference type="KEGG" id="sfx:S1342"/>
<dbReference type="PATRIC" id="fig|198214.7.peg.1476"/>
<dbReference type="HOGENOM" id="CLU_050164_2_0_6"/>
<dbReference type="Proteomes" id="UP000001006">
    <property type="component" value="Chromosome"/>
</dbReference>
<dbReference type="Proteomes" id="UP000002673">
    <property type="component" value="Chromosome"/>
</dbReference>
<dbReference type="GO" id="GO:0005829">
    <property type="term" value="C:cytosol"/>
    <property type="evidence" value="ECO:0007669"/>
    <property type="project" value="TreeGrafter"/>
</dbReference>
<dbReference type="GO" id="GO:0052816">
    <property type="term" value="F:long-chain fatty acyl-CoA hydrolase activity"/>
    <property type="evidence" value="ECO:0007669"/>
    <property type="project" value="TreeGrafter"/>
</dbReference>
<dbReference type="GO" id="GO:0006637">
    <property type="term" value="P:acyl-CoA metabolic process"/>
    <property type="evidence" value="ECO:0007669"/>
    <property type="project" value="TreeGrafter"/>
</dbReference>
<dbReference type="GO" id="GO:0009062">
    <property type="term" value="P:fatty acid catabolic process"/>
    <property type="evidence" value="ECO:0007669"/>
    <property type="project" value="TreeGrafter"/>
</dbReference>
<dbReference type="CDD" id="cd03442">
    <property type="entry name" value="BFIT_BACH"/>
    <property type="match status" value="1"/>
</dbReference>
<dbReference type="FunFam" id="3.10.129.10:FF:000008">
    <property type="entry name" value="Acyl-CoA thioester hydrolase"/>
    <property type="match status" value="1"/>
</dbReference>
<dbReference type="Gene3D" id="3.10.129.10">
    <property type="entry name" value="Hotdog Thioesterase"/>
    <property type="match status" value="1"/>
</dbReference>
<dbReference type="InterPro" id="IPR040170">
    <property type="entry name" value="Cytosol_ACT"/>
</dbReference>
<dbReference type="InterPro" id="IPR033120">
    <property type="entry name" value="HOTDOG_ACOT"/>
</dbReference>
<dbReference type="InterPro" id="IPR029069">
    <property type="entry name" value="HotDog_dom_sf"/>
</dbReference>
<dbReference type="InterPro" id="IPR006683">
    <property type="entry name" value="Thioestr_dom"/>
</dbReference>
<dbReference type="NCBIfam" id="NF007970">
    <property type="entry name" value="PRK10694.1"/>
    <property type="match status" value="1"/>
</dbReference>
<dbReference type="PANTHER" id="PTHR11049">
    <property type="entry name" value="ACYL COENZYME A THIOESTER HYDROLASE"/>
    <property type="match status" value="1"/>
</dbReference>
<dbReference type="PANTHER" id="PTHR11049:SF5">
    <property type="entry name" value="ACYL-COA THIOESTER HYDROLASE YCIA"/>
    <property type="match status" value="1"/>
</dbReference>
<dbReference type="Pfam" id="PF03061">
    <property type="entry name" value="4HBT"/>
    <property type="match status" value="1"/>
</dbReference>
<dbReference type="SUPFAM" id="SSF54637">
    <property type="entry name" value="Thioesterase/thiol ester dehydrase-isomerase"/>
    <property type="match status" value="1"/>
</dbReference>
<dbReference type="PROSITE" id="PS51770">
    <property type="entry name" value="HOTDOG_ACOT"/>
    <property type="match status" value="1"/>
</dbReference>
<name>YCIA_SHIFL</name>